<evidence type="ECO:0000255" key="1">
    <source>
        <dbReference type="HAMAP-Rule" id="MF_01379"/>
    </source>
</evidence>
<keyword id="KW-0007">Acetylation</keyword>
<keyword id="KW-0106">Calcium</keyword>
<keyword id="KW-0148">Chlorophyll</keyword>
<keyword id="KW-0150">Chloroplast</keyword>
<keyword id="KW-0157">Chromophore</keyword>
<keyword id="KW-0249">Electron transport</keyword>
<keyword id="KW-0359">Herbicide resistance</keyword>
<keyword id="KW-0408">Iron</keyword>
<keyword id="KW-0460">Magnesium</keyword>
<keyword id="KW-0464">Manganese</keyword>
<keyword id="KW-0472">Membrane</keyword>
<keyword id="KW-0479">Metal-binding</keyword>
<keyword id="KW-0560">Oxidoreductase</keyword>
<keyword id="KW-0597">Phosphoprotein</keyword>
<keyword id="KW-0602">Photosynthesis</keyword>
<keyword id="KW-0604">Photosystem II</keyword>
<keyword id="KW-0934">Plastid</keyword>
<keyword id="KW-0793">Thylakoid</keyword>
<keyword id="KW-0812">Transmembrane</keyword>
<keyword id="KW-1133">Transmembrane helix</keyword>
<keyword id="KW-0813">Transport</keyword>
<organism>
    <name type="scientific">Conocephalum japonicum</name>
    <name type="common">Liverwort</name>
    <name type="synonym">Conocephalum supradecompositum</name>
    <dbReference type="NCBI Taxonomy" id="134427"/>
    <lineage>
        <taxon>Eukaryota</taxon>
        <taxon>Viridiplantae</taxon>
        <taxon>Streptophyta</taxon>
        <taxon>Embryophyta</taxon>
        <taxon>Marchantiophyta</taxon>
        <taxon>Marchantiopsida</taxon>
        <taxon>Marchantiidae</taxon>
        <taxon>Marchantiales</taxon>
        <taxon>Conocephalaceae</taxon>
        <taxon>Conocephalum</taxon>
    </lineage>
</organism>
<sequence length="353" mass="38732">MTATLERRESASIWGRFCNWVTSTETRLYIGWFGVLMIPTLLTATSVFIIAFIAAPPVDIDGIREPVSGSLLYGNNIISGAIIPTSAAIGLHFYPIWEAASVDEWLYNGGPYELIVLHFLLGVACYMGREWELSYRLGMRPWIAVAYSAPVAAATAVFLIYPIGQGSFSDGMPLGISGTFNFMIVFQAEHNILMHPFHMLGVAGVFGGSLFSAMHGSLVTSSLIRETTENESANAGYKFGQEEETYNIVAAHGYFGRLIFQYASFNNSRSLHFFLAAWPVVGIWFTALGISTMAFNLNGFNFNQSVVDSQGRVINTWADIINRANPGMEVMHERNAHNFPPNLAAIEAPAVNG</sequence>
<feature type="initiator methionine" description="Removed" evidence="1">
    <location>
        <position position="1"/>
    </location>
</feature>
<feature type="chain" id="PRO_0000090434" description="Photosystem II protein D1" evidence="1">
    <location>
        <begin position="2"/>
        <end position="344"/>
    </location>
</feature>
<feature type="propeptide" id="PRO_0000316447" evidence="1">
    <location>
        <begin position="345"/>
        <end position="353"/>
    </location>
</feature>
<feature type="transmembrane region" description="Helical" evidence="1">
    <location>
        <begin position="29"/>
        <end position="46"/>
    </location>
</feature>
<feature type="transmembrane region" description="Helical" evidence="1">
    <location>
        <begin position="118"/>
        <end position="133"/>
    </location>
</feature>
<feature type="transmembrane region" description="Helical" evidence="1">
    <location>
        <begin position="142"/>
        <end position="156"/>
    </location>
</feature>
<feature type="transmembrane region" description="Helical" evidence="1">
    <location>
        <begin position="197"/>
        <end position="218"/>
    </location>
</feature>
<feature type="transmembrane region" description="Helical" evidence="1">
    <location>
        <begin position="274"/>
        <end position="288"/>
    </location>
</feature>
<feature type="binding site" description="axial binding residue" evidence="1">
    <location>
        <position position="118"/>
    </location>
    <ligand>
        <name>chlorophyll a</name>
        <dbReference type="ChEBI" id="CHEBI:58416"/>
        <label>ChlzD1</label>
    </ligand>
    <ligandPart>
        <name>Mg</name>
        <dbReference type="ChEBI" id="CHEBI:25107"/>
    </ligandPart>
</feature>
<feature type="binding site" evidence="1">
    <location>
        <position position="126"/>
    </location>
    <ligand>
        <name>pheophytin a</name>
        <dbReference type="ChEBI" id="CHEBI:136840"/>
        <label>D1</label>
    </ligand>
</feature>
<feature type="binding site" evidence="1">
    <location>
        <position position="170"/>
    </location>
    <ligand>
        <name>[CaMn4O5] cluster</name>
        <dbReference type="ChEBI" id="CHEBI:189552"/>
    </ligand>
</feature>
<feature type="binding site" evidence="1">
    <location>
        <position position="189"/>
    </location>
    <ligand>
        <name>[CaMn4O5] cluster</name>
        <dbReference type="ChEBI" id="CHEBI:189552"/>
    </ligand>
</feature>
<feature type="binding site" description="axial binding residue" evidence="1">
    <location>
        <position position="198"/>
    </location>
    <ligand>
        <name>chlorophyll a</name>
        <dbReference type="ChEBI" id="CHEBI:58416"/>
        <label>PD1</label>
    </ligand>
    <ligandPart>
        <name>Mg</name>
        <dbReference type="ChEBI" id="CHEBI:25107"/>
    </ligandPart>
</feature>
<feature type="binding site" evidence="1">
    <location>
        <position position="215"/>
    </location>
    <ligand>
        <name>a quinone</name>
        <dbReference type="ChEBI" id="CHEBI:132124"/>
        <label>B</label>
    </ligand>
</feature>
<feature type="binding site" evidence="1">
    <location>
        <position position="215"/>
    </location>
    <ligand>
        <name>Fe cation</name>
        <dbReference type="ChEBI" id="CHEBI:24875"/>
        <note>ligand shared with heterodimeric partner</note>
    </ligand>
</feature>
<feature type="binding site" evidence="1">
    <location>
        <begin position="264"/>
        <end position="265"/>
    </location>
    <ligand>
        <name>a quinone</name>
        <dbReference type="ChEBI" id="CHEBI:132124"/>
        <label>B</label>
    </ligand>
</feature>
<feature type="binding site" evidence="1">
    <location>
        <position position="272"/>
    </location>
    <ligand>
        <name>Fe cation</name>
        <dbReference type="ChEBI" id="CHEBI:24875"/>
        <note>ligand shared with heterodimeric partner</note>
    </ligand>
</feature>
<feature type="binding site" evidence="1">
    <location>
        <position position="332"/>
    </location>
    <ligand>
        <name>[CaMn4O5] cluster</name>
        <dbReference type="ChEBI" id="CHEBI:189552"/>
    </ligand>
</feature>
<feature type="binding site" evidence="1">
    <location>
        <position position="333"/>
    </location>
    <ligand>
        <name>[CaMn4O5] cluster</name>
        <dbReference type="ChEBI" id="CHEBI:189552"/>
    </ligand>
</feature>
<feature type="binding site" evidence="1">
    <location>
        <position position="344"/>
    </location>
    <ligand>
        <name>[CaMn4O5] cluster</name>
        <dbReference type="ChEBI" id="CHEBI:189552"/>
    </ligand>
</feature>
<feature type="site" description="Tyrosine radical intermediate" evidence="1">
    <location>
        <position position="161"/>
    </location>
</feature>
<feature type="site" description="Stabilizes free radical intermediate" evidence="1">
    <location>
        <position position="190"/>
    </location>
</feature>
<feature type="site" description="Cleavage; by CTPA" evidence="1">
    <location>
        <begin position="344"/>
        <end position="345"/>
    </location>
</feature>
<feature type="modified residue" description="N-acetylthreonine" evidence="1">
    <location>
        <position position="2"/>
    </location>
</feature>
<feature type="modified residue" description="Phosphothreonine" evidence="1">
    <location>
        <position position="2"/>
    </location>
</feature>
<accession>Q9TNF8</accession>
<dbReference type="EC" id="1.10.3.9" evidence="1"/>
<dbReference type="EMBL" id="AB020621">
    <property type="protein sequence ID" value="BAA82781.1"/>
    <property type="molecule type" value="Genomic_DNA"/>
</dbReference>
<dbReference type="SMR" id="Q9TNF8"/>
<dbReference type="GO" id="GO:0009535">
    <property type="term" value="C:chloroplast thylakoid membrane"/>
    <property type="evidence" value="ECO:0007669"/>
    <property type="project" value="UniProtKB-SubCell"/>
</dbReference>
<dbReference type="GO" id="GO:0009523">
    <property type="term" value="C:photosystem II"/>
    <property type="evidence" value="ECO:0007669"/>
    <property type="project" value="UniProtKB-KW"/>
</dbReference>
<dbReference type="GO" id="GO:0016168">
    <property type="term" value="F:chlorophyll binding"/>
    <property type="evidence" value="ECO:0007669"/>
    <property type="project" value="UniProtKB-UniRule"/>
</dbReference>
<dbReference type="GO" id="GO:0045156">
    <property type="term" value="F:electron transporter, transferring electrons within the cyclic electron transport pathway of photosynthesis activity"/>
    <property type="evidence" value="ECO:0007669"/>
    <property type="project" value="InterPro"/>
</dbReference>
<dbReference type="GO" id="GO:0005506">
    <property type="term" value="F:iron ion binding"/>
    <property type="evidence" value="ECO:0007669"/>
    <property type="project" value="UniProtKB-UniRule"/>
</dbReference>
<dbReference type="GO" id="GO:0016682">
    <property type="term" value="F:oxidoreductase activity, acting on diphenols and related substances as donors, oxygen as acceptor"/>
    <property type="evidence" value="ECO:0007669"/>
    <property type="project" value="UniProtKB-UniRule"/>
</dbReference>
<dbReference type="GO" id="GO:0010242">
    <property type="term" value="F:oxygen evolving activity"/>
    <property type="evidence" value="ECO:0007669"/>
    <property type="project" value="UniProtKB-EC"/>
</dbReference>
<dbReference type="GO" id="GO:0009772">
    <property type="term" value="P:photosynthetic electron transport in photosystem II"/>
    <property type="evidence" value="ECO:0007669"/>
    <property type="project" value="InterPro"/>
</dbReference>
<dbReference type="GO" id="GO:0009635">
    <property type="term" value="P:response to herbicide"/>
    <property type="evidence" value="ECO:0007669"/>
    <property type="project" value="UniProtKB-KW"/>
</dbReference>
<dbReference type="CDD" id="cd09289">
    <property type="entry name" value="Photosystem-II_D1"/>
    <property type="match status" value="1"/>
</dbReference>
<dbReference type="FunFam" id="1.20.85.10:FF:000002">
    <property type="entry name" value="Photosystem II protein D1"/>
    <property type="match status" value="1"/>
</dbReference>
<dbReference type="Gene3D" id="1.20.85.10">
    <property type="entry name" value="Photosystem II protein D1-like"/>
    <property type="match status" value="1"/>
</dbReference>
<dbReference type="HAMAP" id="MF_01379">
    <property type="entry name" value="PSII_PsbA_D1"/>
    <property type="match status" value="1"/>
</dbReference>
<dbReference type="InterPro" id="IPR055266">
    <property type="entry name" value="D1/D2"/>
</dbReference>
<dbReference type="InterPro" id="IPR036854">
    <property type="entry name" value="Photo_II_D1/D2_sf"/>
</dbReference>
<dbReference type="InterPro" id="IPR000484">
    <property type="entry name" value="Photo_RC_L/M"/>
</dbReference>
<dbReference type="InterPro" id="IPR055265">
    <property type="entry name" value="Photo_RC_L/M_CS"/>
</dbReference>
<dbReference type="InterPro" id="IPR005867">
    <property type="entry name" value="PSII_D1"/>
</dbReference>
<dbReference type="NCBIfam" id="TIGR01151">
    <property type="entry name" value="psbA"/>
    <property type="match status" value="1"/>
</dbReference>
<dbReference type="PANTHER" id="PTHR33149:SF12">
    <property type="entry name" value="PHOTOSYSTEM II D2 PROTEIN"/>
    <property type="match status" value="1"/>
</dbReference>
<dbReference type="PANTHER" id="PTHR33149">
    <property type="entry name" value="PHOTOSYSTEM II PROTEIN D1"/>
    <property type="match status" value="1"/>
</dbReference>
<dbReference type="Pfam" id="PF00124">
    <property type="entry name" value="Photo_RC"/>
    <property type="match status" value="1"/>
</dbReference>
<dbReference type="PRINTS" id="PR00256">
    <property type="entry name" value="REACTNCENTRE"/>
</dbReference>
<dbReference type="SUPFAM" id="SSF81483">
    <property type="entry name" value="Bacterial photosystem II reaction centre, L and M subunits"/>
    <property type="match status" value="1"/>
</dbReference>
<dbReference type="PROSITE" id="PS00244">
    <property type="entry name" value="REACTION_CENTER"/>
    <property type="match status" value="1"/>
</dbReference>
<protein>
    <recommendedName>
        <fullName evidence="1">Photosystem II protein D1</fullName>
        <shortName evidence="1">PSII D1 protein</shortName>
        <ecNumber evidence="1">1.10.3.9</ecNumber>
    </recommendedName>
    <alternativeName>
        <fullName evidence="1">Photosystem II Q(B) protein</fullName>
    </alternativeName>
</protein>
<reference key="1">
    <citation type="journal article" date="2001" name="Genes Genet. Syst.">
        <title>Phylogenetic relationships among taxa of the liverwort Conocephalum conicum (Conocephalaceae) revealed by psbA sequence.</title>
        <authorList>
            <person name="Ki H.N."/>
            <person name="Nitasaka E."/>
            <person name="Odrzykoski I.J."/>
            <person name="Yamazak T."/>
        </authorList>
    </citation>
    <scope>NUCLEOTIDE SEQUENCE [GENOMIC DNA]</scope>
    <source>
        <tissue>Thallus</tissue>
    </source>
</reference>
<geneLocation type="chloroplast"/>
<proteinExistence type="inferred from homology"/>
<name>PSBA_CONJP</name>
<gene>
    <name evidence="1" type="primary">psbA</name>
</gene>
<comment type="function">
    <text evidence="1">Photosystem II (PSII) is a light-driven water:plastoquinone oxidoreductase that uses light energy to abstract electrons from H(2)O, generating O(2) and a proton gradient subsequently used for ATP formation. It consists of a core antenna complex that captures photons, and an electron transfer chain that converts photonic excitation into a charge separation. The D1/D2 (PsbA/PsbD) reaction center heterodimer binds P680, the primary electron donor of PSII as well as several subsequent electron acceptors.</text>
</comment>
<comment type="catalytic activity">
    <reaction evidence="1">
        <text>2 a plastoquinone + 4 hnu + 2 H2O = 2 a plastoquinol + O2</text>
        <dbReference type="Rhea" id="RHEA:36359"/>
        <dbReference type="Rhea" id="RHEA-COMP:9561"/>
        <dbReference type="Rhea" id="RHEA-COMP:9562"/>
        <dbReference type="ChEBI" id="CHEBI:15377"/>
        <dbReference type="ChEBI" id="CHEBI:15379"/>
        <dbReference type="ChEBI" id="CHEBI:17757"/>
        <dbReference type="ChEBI" id="CHEBI:30212"/>
        <dbReference type="ChEBI" id="CHEBI:62192"/>
        <dbReference type="EC" id="1.10.3.9"/>
    </reaction>
</comment>
<comment type="cofactor">
    <text evidence="1">The D1/D2 heterodimer binds P680, chlorophylls that are the primary electron donor of PSII, and subsequent electron acceptors. It shares a non-heme iron and each subunit binds pheophytin, quinone, additional chlorophylls, carotenoids and lipids. D1 provides most of the ligands for the Mn4-Ca-O5 cluster of the oxygen-evolving complex (OEC). There is also a Cl(-1) ion associated with D1 and D2, which is required for oxygen evolution. The PSII complex binds additional chlorophylls, carotenoids and specific lipids.</text>
</comment>
<comment type="subunit">
    <text evidence="1">PSII is composed of 1 copy each of membrane proteins PsbA, PsbB, PsbC, PsbD, PsbE, PsbF, PsbH, PsbI, PsbJ, PsbK, PsbL, PsbM, PsbT, PsbX, PsbY, PsbZ, Psb30/Ycf12, at least 3 peripheral proteins of the oxygen-evolving complex and a large number of cofactors. It forms dimeric complexes.</text>
</comment>
<comment type="subcellular location">
    <subcellularLocation>
        <location evidence="1">Plastid</location>
        <location evidence="1">Chloroplast thylakoid membrane</location>
        <topology evidence="1">Multi-pass membrane protein</topology>
    </subcellularLocation>
</comment>
<comment type="PTM">
    <text evidence="1">Tyr-161 forms a radical intermediate that is referred to as redox-active TyrZ, YZ or Y-Z.</text>
</comment>
<comment type="PTM">
    <text evidence="1">C-terminally processed by CTPA; processing is essential to allow assembly of the oxygen-evolving complex and thus photosynthetic growth.</text>
</comment>
<comment type="miscellaneous">
    <text evidence="1">2 of the reaction center chlorophylls (ChlD1 and ChlD2) are entirely coordinated by water.</text>
</comment>
<comment type="miscellaneous">
    <text evidence="1">Herbicides such as atrazine, BNT, diuron or ioxynil bind in the Q(B) binding site and block subsequent electron transfer.</text>
</comment>
<comment type="similarity">
    <text evidence="1">Belongs to the reaction center PufL/M/PsbA/D family.</text>
</comment>